<feature type="initiator methionine" description="Removed" evidence="2">
    <location>
        <position position="1"/>
    </location>
</feature>
<feature type="chain" id="PRO_0000418504" description="L-arabinose 1-dehydrogenase (NAD(P)(+))">
    <location>
        <begin position="2"/>
        <end position="309"/>
    </location>
</feature>
<feature type="active site" description="Proton donor" evidence="1">
    <location>
        <position position="91"/>
    </location>
</feature>
<feature type="binding site" evidence="1">
    <location>
        <position position="15"/>
    </location>
    <ligand>
        <name>NADP(+)</name>
        <dbReference type="ChEBI" id="CHEBI:58349"/>
    </ligand>
</feature>
<feature type="binding site" evidence="1">
    <location>
        <begin position="37"/>
        <end position="38"/>
    </location>
    <ligand>
        <name>NADP(+)</name>
        <dbReference type="ChEBI" id="CHEBI:58349"/>
    </ligand>
</feature>
<feature type="binding site" evidence="1 5">
    <location>
        <position position="169"/>
    </location>
    <ligand>
        <name>NADP(+)</name>
        <dbReference type="ChEBI" id="CHEBI:58349"/>
    </ligand>
</feature>
<feature type="mutagenesis site" description="Loss of activity." evidence="2">
    <original>D</original>
    <variation>A</variation>
    <location>
        <position position="169"/>
    </location>
</feature>
<feature type="mutagenesis site" description="Decrease by 4 orders of magnitude in catalytic efficiency." evidence="2">
    <original>N</original>
    <variation>A</variation>
    <location>
        <position position="173"/>
    </location>
</feature>
<feature type="strand" evidence="6">
    <location>
        <begin position="5"/>
        <end position="10"/>
    </location>
</feature>
<feature type="helix" evidence="6">
    <location>
        <begin position="14"/>
        <end position="18"/>
    </location>
</feature>
<feature type="helix" evidence="6">
    <location>
        <begin position="20"/>
        <end position="25"/>
    </location>
</feature>
<feature type="strand" evidence="6">
    <location>
        <begin position="30"/>
        <end position="36"/>
    </location>
</feature>
<feature type="strand" evidence="6">
    <location>
        <begin position="38"/>
        <end position="40"/>
    </location>
</feature>
<feature type="strand" evidence="6">
    <location>
        <begin position="45"/>
        <end position="50"/>
    </location>
</feature>
<feature type="helix" evidence="6">
    <location>
        <begin position="51"/>
        <end position="57"/>
    </location>
</feature>
<feature type="strand" evidence="6">
    <location>
        <begin position="63"/>
        <end position="66"/>
    </location>
</feature>
<feature type="helix" evidence="6">
    <location>
        <begin position="70"/>
        <end position="72"/>
    </location>
</feature>
<feature type="helix" evidence="6">
    <location>
        <begin position="73"/>
        <end position="82"/>
    </location>
</feature>
<feature type="strand" evidence="6">
    <location>
        <begin position="86"/>
        <end position="89"/>
    </location>
</feature>
<feature type="strand" evidence="6">
    <location>
        <begin position="91"/>
        <end position="93"/>
    </location>
</feature>
<feature type="helix" evidence="6">
    <location>
        <begin position="97"/>
        <end position="110"/>
    </location>
</feature>
<feature type="strand" evidence="6">
    <location>
        <begin position="114"/>
        <end position="116"/>
    </location>
</feature>
<feature type="helix" evidence="6">
    <location>
        <begin position="119"/>
        <end position="122"/>
    </location>
</feature>
<feature type="helix" evidence="6">
    <location>
        <begin position="126"/>
        <end position="134"/>
    </location>
</feature>
<feature type="strand" evidence="6">
    <location>
        <begin position="138"/>
        <end position="146"/>
    </location>
</feature>
<feature type="helix" evidence="6">
    <location>
        <begin position="149"/>
        <end position="152"/>
    </location>
</feature>
<feature type="helix" evidence="6">
    <location>
        <begin position="158"/>
        <end position="160"/>
    </location>
</feature>
<feature type="helix" evidence="6">
    <location>
        <begin position="168"/>
        <end position="181"/>
    </location>
</feature>
<feature type="strand" evidence="7">
    <location>
        <begin position="182"/>
        <end position="184"/>
    </location>
</feature>
<feature type="strand" evidence="6">
    <location>
        <begin position="186"/>
        <end position="196"/>
    </location>
</feature>
<feature type="strand" evidence="6">
    <location>
        <begin position="203"/>
        <end position="211"/>
    </location>
</feature>
<feature type="strand" evidence="6">
    <location>
        <begin position="216"/>
        <end position="222"/>
    </location>
</feature>
<feature type="strand" evidence="6">
    <location>
        <begin position="230"/>
        <end position="237"/>
    </location>
</feature>
<feature type="strand" evidence="6">
    <location>
        <begin position="240"/>
        <end position="245"/>
    </location>
</feature>
<feature type="helix" evidence="6">
    <location>
        <begin position="246"/>
        <end position="248"/>
    </location>
</feature>
<feature type="strand" evidence="6">
    <location>
        <begin position="250"/>
        <end position="253"/>
    </location>
</feature>
<feature type="strand" evidence="7">
    <location>
        <begin position="256"/>
        <end position="258"/>
    </location>
</feature>
<feature type="helix" evidence="6">
    <location>
        <begin position="265"/>
        <end position="279"/>
    </location>
</feature>
<feature type="helix" evidence="6">
    <location>
        <begin position="287"/>
        <end position="298"/>
    </location>
</feature>
<feature type="strand" evidence="6">
    <location>
        <begin position="300"/>
        <end position="304"/>
    </location>
</feature>
<evidence type="ECO:0000250" key="1">
    <source>
        <dbReference type="UniProtKB" id="B3TMR8"/>
    </source>
</evidence>
<evidence type="ECO:0000269" key="2">
    <source>
    </source>
</evidence>
<evidence type="ECO:0000303" key="3">
    <source>
    </source>
</evidence>
<evidence type="ECO:0000305" key="4"/>
<evidence type="ECO:0000305" key="5">
    <source>
    </source>
</evidence>
<evidence type="ECO:0007829" key="6">
    <source>
        <dbReference type="PDB" id="6JNJ"/>
    </source>
</evidence>
<evidence type="ECO:0007829" key="7">
    <source>
        <dbReference type="PDB" id="7CGR"/>
    </source>
</evidence>
<gene>
    <name type="primary">araA</name>
</gene>
<reference key="1">
    <citation type="journal article" date="2006" name="J. Biol. Chem.">
        <title>Cloning, expression, and characterization of bacterial L-arabinose 1-dehydrogenase involved in an alternative pathway of L-arabinose metabolism.</title>
        <authorList>
            <person name="Watanabe S."/>
            <person name="Kodaki T."/>
            <person name="Makino K."/>
        </authorList>
    </citation>
    <scope>NUCLEOTIDE SEQUENCE [GENOMIC DNA]</scope>
    <scope>PROTEIN SEQUENCE OF 2-16 AND 89-103</scope>
    <scope>FUNCTION IN ARABINOSE DEGRADATION</scope>
    <scope>CATALYTIC ACTIVITY</scope>
    <scope>SUBSTRATE SPECIFICITY</scope>
    <scope>BIOPHYSICOCHEMICAL PROPERTIES</scope>
    <scope>INDUCTION</scope>
    <scope>SUBUNIT</scope>
    <scope>DISRUPTION PHENOTYPE</scope>
    <scope>MUTAGENESIS OF ASP-169 AND ASN-173</scope>
    <scope>REACTION MECHANISM</scope>
    <scope>PATHWAY</scope>
    <source>
        <strain>ATCC 29145 / DSM 1690 / IMET 11303 / Sp7</strain>
    </source>
</reference>
<reference key="2">
    <citation type="journal article" date="2006" name="J. Biol. Chem.">
        <title>Identification and characterization of L-arabonate dehydratase, L-2-keto-3-deoxyarabonate dehydratase and L-arabinolactonase involved in an alternative pathway of L-arabinose metabolism: novel evolutionary insight into sugar metabolism.</title>
        <authorList>
            <person name="Watanabe S."/>
            <person name="Shimada N."/>
            <person name="Tajima K."/>
            <person name="Kodaki T."/>
            <person name="Makino K."/>
        </authorList>
    </citation>
    <scope>NUCLEOTIDE SEQUENCE [GENOMIC DNA]</scope>
    <source>
        <strain>ATCC 29145 / DSM 1690 / IMET 11303 / Sp7</strain>
    </source>
</reference>
<reference key="3">
    <citation type="journal article" date="1982" name="J. Bacteriol.">
        <title>L-arabinose metabolism in Azospirillum brasiliense.</title>
        <authorList>
            <person name="Novick N.J."/>
            <person name="Tyler M.E."/>
        </authorList>
    </citation>
    <scope>PATHWAY</scope>
    <source>
        <strain>ATCC 29145 / DSM 1690 / IMET 11303 / Sp7</strain>
    </source>
</reference>
<accession>Q53TZ2</accession>
<proteinExistence type="evidence at protein level"/>
<dbReference type="EC" id="1.1.1.376" evidence="2"/>
<dbReference type="EC" id="1.1.1.120" evidence="2"/>
<dbReference type="EC" id="1.1.1.48" evidence="2"/>
<dbReference type="EMBL" id="AB211983">
    <property type="protein sequence ID" value="BAD95974.1"/>
    <property type="molecule type" value="Genomic_DNA"/>
</dbReference>
<dbReference type="EMBL" id="AB241136">
    <property type="protein sequence ID" value="BAE94271.1"/>
    <property type="molecule type" value="Genomic_DNA"/>
</dbReference>
<dbReference type="PDB" id="6JNJ">
    <property type="method" value="X-ray"/>
    <property type="resolution" value="1.50 A"/>
    <property type="chains" value="A/B=1-309"/>
</dbReference>
<dbReference type="PDB" id="6JNK">
    <property type="method" value="X-ray"/>
    <property type="resolution" value="2.20 A"/>
    <property type="chains" value="A/B/C/D=2-309"/>
</dbReference>
<dbReference type="PDB" id="7CGQ">
    <property type="method" value="X-ray"/>
    <property type="resolution" value="2.21 A"/>
    <property type="chains" value="A/B/C/D=2-309"/>
</dbReference>
<dbReference type="PDB" id="7CGR">
    <property type="method" value="X-ray"/>
    <property type="resolution" value="2.09 A"/>
    <property type="chains" value="A/B/C/D=2-309"/>
</dbReference>
<dbReference type="PDBsum" id="6JNJ"/>
<dbReference type="PDBsum" id="6JNK"/>
<dbReference type="PDBsum" id="7CGQ"/>
<dbReference type="PDBsum" id="7CGR"/>
<dbReference type="SMR" id="Q53TZ2"/>
<dbReference type="KEGG" id="ag:BAD95974"/>
<dbReference type="BRENDA" id="1.1.1.376">
    <property type="organism ID" value="611"/>
</dbReference>
<dbReference type="SABIO-RK" id="Q53TZ2"/>
<dbReference type="UniPathway" id="UPA00141"/>
<dbReference type="GO" id="GO:0047910">
    <property type="term" value="F:galactose 1-dehydrogenase (NADP+) activity"/>
    <property type="evidence" value="ECO:0000314"/>
    <property type="project" value="UniProtKB"/>
</dbReference>
<dbReference type="GO" id="GO:0019151">
    <property type="term" value="F:galactose 1-dehydrogenase activity"/>
    <property type="evidence" value="ECO:0000314"/>
    <property type="project" value="UniProtKB"/>
</dbReference>
<dbReference type="GO" id="GO:0050022">
    <property type="term" value="F:L-arabinose 1-dehydrogenase (NAD+) activity"/>
    <property type="evidence" value="ECO:0000314"/>
    <property type="project" value="UniProtKB"/>
</dbReference>
<dbReference type="GO" id="GO:0044103">
    <property type="term" value="F:L-arabinose 1-dehydrogenase (NADP+) activity"/>
    <property type="evidence" value="ECO:0007669"/>
    <property type="project" value="UniProtKB-EC"/>
</dbReference>
<dbReference type="GO" id="GO:0070403">
    <property type="term" value="F:NAD+ binding"/>
    <property type="evidence" value="ECO:0000314"/>
    <property type="project" value="UniProtKB"/>
</dbReference>
<dbReference type="GO" id="GO:0070401">
    <property type="term" value="F:NADP+ binding"/>
    <property type="evidence" value="ECO:0000314"/>
    <property type="project" value="UniProtKB"/>
</dbReference>
<dbReference type="GO" id="GO:0016616">
    <property type="term" value="F:oxidoreductase activity, acting on the CH-OH group of donors, NAD or NADP as acceptor"/>
    <property type="evidence" value="ECO:0000314"/>
    <property type="project" value="UniProtKB"/>
</dbReference>
<dbReference type="GO" id="GO:0019572">
    <property type="term" value="P:L-arabinose catabolic process"/>
    <property type="evidence" value="ECO:0000315"/>
    <property type="project" value="UniProtKB"/>
</dbReference>
<dbReference type="GO" id="GO:0019570">
    <property type="term" value="P:L-arabinose catabolic process to 2-oxoglutarate"/>
    <property type="evidence" value="ECO:0000314"/>
    <property type="project" value="UniProtKB"/>
</dbReference>
<dbReference type="FunFam" id="3.30.360.10:FF:000035">
    <property type="entry name" value="Galactose 1-dehydrogenase"/>
    <property type="match status" value="1"/>
</dbReference>
<dbReference type="Gene3D" id="3.30.360.10">
    <property type="entry name" value="Dihydrodipicolinate Reductase, domain 2"/>
    <property type="match status" value="1"/>
</dbReference>
<dbReference type="Gene3D" id="3.40.50.720">
    <property type="entry name" value="NAD(P)-binding Rossmann-like Domain"/>
    <property type="match status" value="1"/>
</dbReference>
<dbReference type="InterPro" id="IPR000683">
    <property type="entry name" value="Gfo/Idh/MocA-like_OxRdtase_N"/>
</dbReference>
<dbReference type="InterPro" id="IPR050463">
    <property type="entry name" value="Gfo/Idh/MocA_oxidrdct_glycsds"/>
</dbReference>
<dbReference type="InterPro" id="IPR036291">
    <property type="entry name" value="NAD(P)-bd_dom_sf"/>
</dbReference>
<dbReference type="PANTHER" id="PTHR43818">
    <property type="entry name" value="BCDNA.GH03377"/>
    <property type="match status" value="1"/>
</dbReference>
<dbReference type="PANTHER" id="PTHR43818:SF7">
    <property type="entry name" value="DEHYDROGENASE"/>
    <property type="match status" value="1"/>
</dbReference>
<dbReference type="Pfam" id="PF01408">
    <property type="entry name" value="GFO_IDH_MocA"/>
    <property type="match status" value="1"/>
</dbReference>
<dbReference type="SUPFAM" id="SSF51735">
    <property type="entry name" value="NAD(P)-binding Rossmann-fold domains"/>
    <property type="match status" value="1"/>
</dbReference>
<keyword id="KW-0002">3D-structure</keyword>
<keyword id="KW-0054">Arabinose catabolism</keyword>
<keyword id="KW-0119">Carbohydrate metabolism</keyword>
<keyword id="KW-0903">Direct protein sequencing</keyword>
<keyword id="KW-0520">NAD</keyword>
<keyword id="KW-0521">NADP</keyword>
<keyword id="KW-0560">Oxidoreductase</keyword>
<organism>
    <name type="scientific">Azospirillum brasilense</name>
    <dbReference type="NCBI Taxonomy" id="192"/>
    <lineage>
        <taxon>Bacteria</taxon>
        <taxon>Pseudomonadati</taxon>
        <taxon>Pseudomonadota</taxon>
        <taxon>Alphaproteobacteria</taxon>
        <taxon>Rhodospirillales</taxon>
        <taxon>Azospirillaceae</taxon>
        <taxon>Azospirillum</taxon>
    </lineage>
</organism>
<sequence>MSDQVSLGVVGIGKIARDQHLPAIDAEPGFKLTACASRHAEVTGVRNYRDLRALLAAERELDAVSLCAPPQVRYAQARAALEAGKHVMLEKPPGATLGEVAVLEALARERGLTLFATWHSRCASAVEPAREWLATRAIRAVQVRWKEDVRRWHPGQQWIWEPGGLGVFDPGINALSIVTRILPRELVLREATLIVPSDVQTPIAAELDCADTDGVPVRAEFDWRHGPVEQWEIAVDTADGVLAISRGGAQLSIAGEPVELGPEREYPALYAHFHALIARGESDVDVRPLRLVADAFLFGRRVQTDAFGR</sequence>
<protein>
    <recommendedName>
        <fullName evidence="3">L-arabinose 1-dehydrogenase (NAD(P)(+))</fullName>
        <ecNumber evidence="2">1.1.1.376</ecNumber>
    </recommendedName>
    <alternativeName>
        <fullName evidence="3">D-galactose 1-dehydrogenase</fullName>
        <ecNumber evidence="2">1.1.1.120</ecNumber>
        <ecNumber evidence="2">1.1.1.48</ecNumber>
    </alternativeName>
</protein>
<comment type="function">
    <text evidence="2">Catalyzes the NAD(P)(+)-dependent conversion of L-arabinose to L-arabino-gamma-lactone. Is involved in a degradation pathway of L-arabinose that allows A.brasilense to grow on L-arabinose as a sole carbon source. Prefers NADP(+) to NAD(+) as electron acceptor. Displays high catalytic efficiency for both L-arabinose and D-galactose in vitro. However, the enzyme appears to be involved in the metabolism of L-arabinose but not D-galactose in vivo. To a lesser extent, is also active on D-talose and D-xylose as substrates in vitro, but not with D-arabinose, D-glucose, D-ribose, L-xylose, L-mannose, L-lyxose, and D-fructose.</text>
</comment>
<comment type="catalytic activity">
    <reaction evidence="2">
        <text>alpha-L-arabinopyanose + NAD(+) = L-arabinono-1,4-lactone + NADH + H(+)</text>
        <dbReference type="Rhea" id="RHEA:17925"/>
        <dbReference type="ChEBI" id="CHEBI:15378"/>
        <dbReference type="ChEBI" id="CHEBI:17100"/>
        <dbReference type="ChEBI" id="CHEBI:46987"/>
        <dbReference type="ChEBI" id="CHEBI:57540"/>
        <dbReference type="ChEBI" id="CHEBI:57945"/>
        <dbReference type="EC" id="1.1.1.376"/>
    </reaction>
</comment>
<comment type="catalytic activity">
    <reaction evidence="2">
        <text>alpha-L-arabinopyanose + NADP(+) = L-arabinono-1,4-lactone + NADPH + H(+)</text>
        <dbReference type="Rhea" id="RHEA:42664"/>
        <dbReference type="ChEBI" id="CHEBI:15378"/>
        <dbReference type="ChEBI" id="CHEBI:17100"/>
        <dbReference type="ChEBI" id="CHEBI:46987"/>
        <dbReference type="ChEBI" id="CHEBI:57783"/>
        <dbReference type="ChEBI" id="CHEBI:58349"/>
        <dbReference type="EC" id="1.1.1.376"/>
    </reaction>
</comment>
<comment type="catalytic activity">
    <reaction evidence="2">
        <text>D-galactose + NAD(+) = D-galactono-1,4-lactone + NADH + H(+)</text>
        <dbReference type="Rhea" id="RHEA:21296"/>
        <dbReference type="ChEBI" id="CHEBI:4139"/>
        <dbReference type="ChEBI" id="CHEBI:15378"/>
        <dbReference type="ChEBI" id="CHEBI:15895"/>
        <dbReference type="ChEBI" id="CHEBI:57540"/>
        <dbReference type="ChEBI" id="CHEBI:57945"/>
        <dbReference type="EC" id="1.1.1.48"/>
    </reaction>
</comment>
<comment type="catalytic activity">
    <reaction evidence="2">
        <text>D-galactose + NADP(+) = D-galactono-1,5-lactone + NADPH + H(+)</text>
        <dbReference type="Rhea" id="RHEA:18625"/>
        <dbReference type="ChEBI" id="CHEBI:4139"/>
        <dbReference type="ChEBI" id="CHEBI:15378"/>
        <dbReference type="ChEBI" id="CHEBI:15945"/>
        <dbReference type="ChEBI" id="CHEBI:57783"/>
        <dbReference type="ChEBI" id="CHEBI:58349"/>
        <dbReference type="EC" id="1.1.1.120"/>
    </reaction>
</comment>
<comment type="biophysicochemical properties">
    <kinetics>
        <KM evidence="2">1.41 mM for L-arabinose (in the presence of NAD(+), at 30 degrees Celsius and pH 9.0)</KM>
        <KM evidence="2">0.255 mM for L-arabinose (in the presence of NADP(+), at 30 degrees Celsius and pH 9.0)</KM>
        <KM evidence="2">1.49 mM for D-galactose (in the presence of NAD(+), at 30 degrees Celsius and pH 9.0)</KM>
        <KM evidence="2">0.109 mM for D-galactose (in the presence of NADP(+), at 30 degrees Celsius and pH 9.0)</KM>
        <KM evidence="2">3.95 mM for D-talose (in the presence of NAD(+), at 30 degrees Celsius and pH 9.0)</KM>
        <KM evidence="2">5.87 mM for D-talose (in the presence of NADP(+), at 30 degrees Celsius and pH 9.0)</KM>
        <KM evidence="2">210 mM for D-xylose (in the presence of NAD(+), at 30 degrees Celsius and pH 9.0)</KM>
        <KM evidence="2">72 mM for D-xylose (in the presence of NADP(+), at 30 degrees Celsius and pH 9.0)</KM>
        <KM evidence="2">0.0095 mM for NADP(+) (at 30 degrees Celsius and pH 9.0)</KM>
        <KM evidence="2">0.053 mM for NAD(+) (at 30 degrees Celsius and pH 9.0)</KM>
        <Vmax evidence="2">25.0 umol/min/mg enzyme for the L-arabinose oxidation with NAD(+) (at 30 degrees Celsius and pH 9.0)</Vmax>
        <Vmax evidence="2">44.9 umol/min/mg enzyme for the L-arabinose oxidation with NADP(+) (at 30 degrees Celsius and pH 9.0)</Vmax>
        <Vmax evidence="2">23.8 umol/min/mg enzyme for the D-galactose oxidation with NAD(+) (at 30 degrees Celsius and pH 9.0)</Vmax>
        <Vmax evidence="2">35.6 umol/min/mg enzyme for the D-galactose oxidation with NADP(+) (at 30 degrees Celsius and pH 9.0)</Vmax>
        <Vmax evidence="2">1.7 umol/min/mg enzyme for the D-talose oxidation with NAD(+) (at 30 degrees Celsius and pH 9.0)</Vmax>
        <Vmax evidence="2">12.8 umol/min/mg enzyme for the D-talose oxidation with NADP(+) (at 30 degrees Celsius and pH 9.0)</Vmax>
        <Vmax evidence="2">5.3 umol/min/mg enzyme for the D-xylose oxidation with NAD(+) (at 30 degrees Celsius and pH 9.0)</Vmax>
        <Vmax evidence="2">14.8 umol/min/mg enzyme for the D-xylose oxidation with NADP(+) (at 30 degrees Celsius and pH 9.0)</Vmax>
    </kinetics>
</comment>
<comment type="pathway">
    <text evidence="5">Carbohydrate degradation; L-arabinose degradation via L-arabinono-1,4-lactone pathway.</text>
</comment>
<comment type="subunit">
    <text evidence="2">Monomer.</text>
</comment>
<comment type="induction">
    <text evidence="2">Induced by L-arabinose but not by D-galactose, D-xylose and D-glucose.</text>
</comment>
<comment type="disruption phenotype">
    <text evidence="2">Cells lacking this gene do not grow on L-arabinose as a sole carbon source but grow on D-galactose, D-xylose or D-glucose at the same growth rate as the wild-type strain.</text>
</comment>
<comment type="similarity">
    <text evidence="4">Belongs to the Gfo/Idh/MocA family.</text>
</comment>
<name>ARAA_AZOBR</name>